<comment type="function">
    <text evidence="2">Part of a membrane-bound complex that couples electron transfer with translocation of ions across the membrane. Couples electron transfer from reduced ferredoxin to NAD(+) with translocation of H(+) out of the cell. Essential for energy conservation during autotrophic growth. Contributes to ATP synthesis during heterotrophic growth.</text>
</comment>
<comment type="cofactor">
    <cofactor evidence="1">
        <name>FMN</name>
        <dbReference type="ChEBI" id="CHEBI:58210"/>
    </cofactor>
</comment>
<comment type="subunit">
    <text evidence="1">The complex is composed of six subunits: RnfA, RnfB, RnfC, RnfD, RnfE and RnfG.</text>
</comment>
<comment type="subcellular location">
    <subcellularLocation>
        <location evidence="1">Cell membrane</location>
        <topology evidence="1">Single-pass membrane protein</topology>
    </subcellularLocation>
</comment>
<comment type="similarity">
    <text evidence="1">Belongs to the RnfG family.</text>
</comment>
<organism>
    <name type="scientific">Clostridium ljungdahlii (strain ATCC 55383 / DSM 13528 / PETC)</name>
    <dbReference type="NCBI Taxonomy" id="748727"/>
    <lineage>
        <taxon>Bacteria</taxon>
        <taxon>Bacillati</taxon>
        <taxon>Bacillota</taxon>
        <taxon>Clostridia</taxon>
        <taxon>Eubacteriales</taxon>
        <taxon>Clostridiaceae</taxon>
        <taxon>Clostridium</taxon>
    </lineage>
</organism>
<sequence length="185" mass="19810">MAKDKDQNSIFAITKNLTITCFISGIIIAAVYYITSPVAAQKQVQIQNDTMRVLVNDADKFNKVNGKKDWYAAQKGNKTIAYVVPAESKGYGGAIELLVAVTPDGKVIDFSIVSHNETPGLGANASKDSFRGQFKDKKADALTVVKDKSNTKNIQAMTGATITSKAVTKGVKEAVEQVTTFTGGK</sequence>
<accession>D8GR68</accession>
<dbReference type="EC" id="7.1.1.-" evidence="1 2"/>
<dbReference type="EMBL" id="CP001666">
    <property type="protein sequence ID" value="ADK14206.1"/>
    <property type="molecule type" value="Genomic_DNA"/>
</dbReference>
<dbReference type="RefSeq" id="WP_013237803.1">
    <property type="nucleotide sequence ID" value="NZ_LITS01000015.1"/>
</dbReference>
<dbReference type="SMR" id="D8GR68"/>
<dbReference type="STRING" id="748727.CLJU_c11380"/>
<dbReference type="KEGG" id="clj:CLJU_c11380"/>
<dbReference type="PATRIC" id="fig|748727.19.peg.4234"/>
<dbReference type="eggNOG" id="COG4659">
    <property type="taxonomic scope" value="Bacteria"/>
</dbReference>
<dbReference type="HOGENOM" id="CLU_077882_2_1_9"/>
<dbReference type="OrthoDB" id="9794010at2"/>
<dbReference type="BRENDA" id="7.1.1.11">
    <property type="organism ID" value="12866"/>
</dbReference>
<dbReference type="Proteomes" id="UP000001656">
    <property type="component" value="Chromosome"/>
</dbReference>
<dbReference type="GO" id="GO:0005886">
    <property type="term" value="C:plasma membrane"/>
    <property type="evidence" value="ECO:0007669"/>
    <property type="project" value="UniProtKB-SubCell"/>
</dbReference>
<dbReference type="GO" id="GO:0009055">
    <property type="term" value="F:electron transfer activity"/>
    <property type="evidence" value="ECO:0007669"/>
    <property type="project" value="InterPro"/>
</dbReference>
<dbReference type="GO" id="GO:0010181">
    <property type="term" value="F:FMN binding"/>
    <property type="evidence" value="ECO:0007669"/>
    <property type="project" value="InterPro"/>
</dbReference>
<dbReference type="GO" id="GO:0022900">
    <property type="term" value="P:electron transport chain"/>
    <property type="evidence" value="ECO:0007669"/>
    <property type="project" value="UniProtKB-UniRule"/>
</dbReference>
<dbReference type="HAMAP" id="MF_00479">
    <property type="entry name" value="RsxG_RnfG"/>
    <property type="match status" value="1"/>
</dbReference>
<dbReference type="InterPro" id="IPR007329">
    <property type="entry name" value="FMN-bd"/>
</dbReference>
<dbReference type="InterPro" id="IPR010209">
    <property type="entry name" value="Ion_transpt_RnfG/RsxG"/>
</dbReference>
<dbReference type="NCBIfam" id="TIGR01947">
    <property type="entry name" value="rnfG"/>
    <property type="match status" value="1"/>
</dbReference>
<dbReference type="PANTHER" id="PTHR36118">
    <property type="entry name" value="ION-TRANSLOCATING OXIDOREDUCTASE COMPLEX SUBUNIT G"/>
    <property type="match status" value="1"/>
</dbReference>
<dbReference type="PANTHER" id="PTHR36118:SF1">
    <property type="entry name" value="ION-TRANSLOCATING OXIDOREDUCTASE COMPLEX SUBUNIT G"/>
    <property type="match status" value="1"/>
</dbReference>
<dbReference type="Pfam" id="PF04205">
    <property type="entry name" value="FMN_bind"/>
    <property type="match status" value="1"/>
</dbReference>
<dbReference type="PIRSF" id="PIRSF006091">
    <property type="entry name" value="E_trnsport_RnfG"/>
    <property type="match status" value="1"/>
</dbReference>
<dbReference type="SMART" id="SM00900">
    <property type="entry name" value="FMN_bind"/>
    <property type="match status" value="1"/>
</dbReference>
<keyword id="KW-1003">Cell membrane</keyword>
<keyword id="KW-0249">Electron transport</keyword>
<keyword id="KW-0285">Flavoprotein</keyword>
<keyword id="KW-0288">FMN</keyword>
<keyword id="KW-0472">Membrane</keyword>
<keyword id="KW-0520">NAD</keyword>
<keyword id="KW-0597">Phosphoprotein</keyword>
<keyword id="KW-1278">Translocase</keyword>
<keyword id="KW-0812">Transmembrane</keyword>
<keyword id="KW-1133">Transmembrane helix</keyword>
<keyword id="KW-0813">Transport</keyword>
<feature type="chain" id="PRO_0000443497" description="Proton-translocating ferredoxin:NAD(+) oxidoreductase complex subunit G">
    <location>
        <begin position="1"/>
        <end position="185"/>
    </location>
</feature>
<feature type="transmembrane region" description="Helical" evidence="1">
    <location>
        <begin position="14"/>
        <end position="34"/>
    </location>
</feature>
<feature type="modified residue" description="FMN phosphoryl threonine" evidence="1">
    <location>
        <position position="161"/>
    </location>
</feature>
<proteinExistence type="inferred from homology"/>
<gene>
    <name evidence="1 4" type="primary">rnfG</name>
    <name evidence="4" type="ordered locus">CLJU_c11380</name>
</gene>
<protein>
    <recommendedName>
        <fullName evidence="3">Proton-translocating ferredoxin:NAD(+) oxidoreductase complex subunit G</fullName>
        <ecNumber evidence="1 2">7.1.1.-</ecNumber>
    </recommendedName>
    <alternativeName>
        <fullName evidence="1 3">Rnf electron transport complex subunit G</fullName>
    </alternativeName>
</protein>
<name>RNFG_CLOLD</name>
<evidence type="ECO:0000255" key="1">
    <source>
        <dbReference type="HAMAP-Rule" id="MF_00479"/>
    </source>
</evidence>
<evidence type="ECO:0000269" key="2">
    <source>
    </source>
</evidence>
<evidence type="ECO:0000305" key="3"/>
<evidence type="ECO:0000312" key="4">
    <source>
        <dbReference type="EMBL" id="ADK14206.1"/>
    </source>
</evidence>
<reference key="1">
    <citation type="journal article" date="2010" name="Proc. Natl. Acad. Sci. U.S.A.">
        <title>Clostridium ljungdahlii represents a microbial production platform based on syngas.</title>
        <authorList>
            <person name="Kopke M."/>
            <person name="Held C."/>
            <person name="Hujer S."/>
            <person name="Liesegang H."/>
            <person name="Wiezer A."/>
            <person name="Wollherr A."/>
            <person name="Ehrenreich A."/>
            <person name="Liebl W."/>
            <person name="Gottschalk G."/>
            <person name="Durre P."/>
        </authorList>
    </citation>
    <scope>NUCLEOTIDE SEQUENCE [LARGE SCALE GENOMIC DNA]</scope>
    <source>
        <strain>ATCC 55383 / DSM 13528 / PETC</strain>
    </source>
</reference>
<reference key="2">
    <citation type="journal article" date="2012" name="MBio">
        <title>The Rnf complex of Clostridium ljungdahlii is a proton-translocating ferredoxin:NAD+ oxidoreductase essential for autotrophic growth.</title>
        <authorList>
            <person name="Tremblay P.L."/>
            <person name="Zhang T."/>
            <person name="Dar S.A."/>
            <person name="Leang C."/>
            <person name="Lovley D.R."/>
        </authorList>
    </citation>
    <scope>FUNCTION</scope>
    <source>
        <strain>ATCC 55383 / DSM 13528 / PETC</strain>
    </source>
</reference>